<evidence type="ECO:0000250" key="1"/>
<evidence type="ECO:0000255" key="2"/>
<evidence type="ECO:0000256" key="3">
    <source>
        <dbReference type="SAM" id="MobiDB-lite"/>
    </source>
</evidence>
<evidence type="ECO:0000305" key="4"/>
<accession>P0DI17</accession>
<accession>Q94HW3</accession>
<accession>Q94HW8</accession>
<accession>Q9SLU7</accession>
<accession>Q9SLU8</accession>
<feature type="chain" id="PRO_0000212743" description="Probable disease resistance protein RF9">
    <location>
        <begin position="1"/>
        <end position="1049"/>
    </location>
</feature>
<feature type="domain" description="NB-ARC">
    <location>
        <begin position="147"/>
        <end position="460"/>
    </location>
</feature>
<feature type="repeat" description="LRR 1">
    <location>
        <begin position="584"/>
        <end position="608"/>
    </location>
</feature>
<feature type="repeat" description="LRR 2">
    <location>
        <begin position="609"/>
        <end position="634"/>
    </location>
</feature>
<feature type="repeat" description="LRR 3">
    <location>
        <begin position="657"/>
        <end position="682"/>
    </location>
</feature>
<feature type="repeat" description="LRR 4">
    <location>
        <begin position="683"/>
        <end position="707"/>
    </location>
</feature>
<feature type="repeat" description="LRR 5">
    <location>
        <begin position="776"/>
        <end position="799"/>
    </location>
</feature>
<feature type="repeat" description="LRR 6">
    <location>
        <begin position="800"/>
        <end position="827"/>
    </location>
</feature>
<feature type="repeat" description="LRR 7">
    <location>
        <begin position="849"/>
        <end position="873"/>
    </location>
</feature>
<feature type="repeat" description="LRR 8">
    <location>
        <begin position="896"/>
        <end position="923"/>
    </location>
</feature>
<feature type="repeat" description="LRR 9">
    <location>
        <begin position="945"/>
        <end position="968"/>
    </location>
</feature>
<feature type="repeat" description="LRR 10">
    <location>
        <begin position="990"/>
        <end position="1015"/>
    </location>
</feature>
<feature type="region of interest" description="Disordered" evidence="3">
    <location>
        <begin position="139"/>
        <end position="158"/>
    </location>
</feature>
<feature type="coiled-coil region" evidence="2">
    <location>
        <begin position="25"/>
        <end position="41"/>
    </location>
</feature>
<feature type="compositionally biased region" description="Basic and acidic residues" evidence="3">
    <location>
        <begin position="144"/>
        <end position="158"/>
    </location>
</feature>
<feature type="binding site" evidence="2">
    <location>
        <begin position="190"/>
        <end position="197"/>
    </location>
    <ligand>
        <name>ATP</name>
        <dbReference type="ChEBI" id="CHEBI:30616"/>
    </ligand>
</feature>
<sequence length="1049" mass="121045">MAGELISFGIQNLWNLLSQECELFQGVEDQVTELKRDLNLLSSFLKDADAKKHTSAVVKNCVEEIKEIIYDGEDTIETFVLEQNLGKTSGIKKSIRRLACIIPDRRRYALGIGGLSNRISKVIRDMQSFGVQQAIVDGGYKQPQGDKQREMRPRFSKDDDSDFVGLEANVKKLVGYLVDEANVQVVSITGMGGLGKTTLAKQVFNHEDVKHQFDGLSWVCVSQDFTRMNVWQKILRDLKPKEEEKKIMEMTQDTLQGELIRLLETSKSLIVLDDIWEKEDWELIKPIFPPTKGWKVLLTSRNESVAMRRNTSYINFKPECLTTEDSWTLFQRIALPMKDAAEFKIDEEKEELGKLMIKHCGGLPLAIRVLGGMLAEKYTSHDWRRLSENIGSHLVGGRTNFNDDNNNTCNYVLSLSFEELPSYLKHCFLYLAHFPDDYEINVKNLSYYWAAEGIFQPRHYDGEIIRDVGDVYIEELVRRNMVISERDVKTSRFETCHLHDMMREVCLLKAKEENFLQITSSRTSTGNSLSIVTSRRLVYQYPITLDVEKDINDPKLRSLVVVANTYMFWGGWSWMLLGSSFIRLELLRVLDIHRAKLKGGKLASSIGQLIHLRYLNLKHAEVTHIPYSLGNLKLLIYLNLVILVSGSTLVPNVLKEMQQLRYLALPKDMGRKTKLELSNLVKLETLKNFSTKNCSLEDLRGMVRLRTLTIELRKETSLETLAASIGGLKYLESLTITDLGSEMRTKEAGIVFDFVYLKTLTLKLYMPRLSKEQHFPSHLTTLYLQHCRLEEDPMPILEKLHQLKELELRRKSFSGKEMVCSSGGFPQLQKLSIKGLEEWEDWKVEESSMPVLHTLDIRDCRKLKQLPDEHLPSHLTSISLFFCCLEEDPMPTLERLVHLKELQLLFRSFSGRIMVCAGSGFPQLHKLKLSELDGLEEWIVEDGSMPQLHTLEIRRCPKLKKLPNGFPQLQNLELNELEEWEEWIVEDGSMPLLHTLRIWNCPKLKQLPDGLRFIYSLKNLTVPKRWKKRLSKGGEDYYKVQHIPSVEFY</sequence>
<name>DRL11_ARATH</name>
<proteinExistence type="evidence at transcript level"/>
<keyword id="KW-0067">ATP-binding</keyword>
<keyword id="KW-0175">Coiled coil</keyword>
<keyword id="KW-0433">Leucine-rich repeat</keyword>
<keyword id="KW-0547">Nucleotide-binding</keyword>
<keyword id="KW-0611">Plant defense</keyword>
<keyword id="KW-1185">Reference proteome</keyword>
<keyword id="KW-0677">Repeat</keyword>
<dbReference type="EMBL" id="AB028201">
    <property type="protein sequence ID" value="BAA87941.1"/>
    <property type="status" value="ALT_INIT"/>
    <property type="molecule type" value="mRNA"/>
</dbReference>
<dbReference type="EMBL" id="AB028202">
    <property type="protein sequence ID" value="BAA87942.1"/>
    <property type="molecule type" value="mRNA"/>
</dbReference>
<dbReference type="EMBL" id="AB078516">
    <property type="protein sequence ID" value="BAB84014.1"/>
    <property type="molecule type" value="Genomic_DNA"/>
</dbReference>
<dbReference type="EMBL" id="AC027036">
    <property type="protein sequence ID" value="AAK62794.1"/>
    <property type="status" value="ALT_SEQ"/>
    <property type="molecule type" value="Genomic_DNA"/>
</dbReference>
<dbReference type="EMBL" id="CP002684">
    <property type="protein sequence ID" value="AEE33564.1"/>
    <property type="molecule type" value="Genomic_DNA"/>
</dbReference>
<dbReference type="EMBL" id="CP002684">
    <property type="protein sequence ID" value="AEE33565.1"/>
    <property type="molecule type" value="Genomic_DNA"/>
</dbReference>
<dbReference type="PIR" id="T52439">
    <property type="entry name" value="T52439"/>
</dbReference>
<dbReference type="PIR" id="T52440">
    <property type="entry name" value="T52440"/>
</dbReference>
<dbReference type="RefSeq" id="NP_001031207.1">
    <property type="nucleotide sequence ID" value="NM_001036130.2"/>
</dbReference>
<dbReference type="RefSeq" id="NP_001185265.1">
    <property type="nucleotide sequence ID" value="NM_001198336.2"/>
</dbReference>
<dbReference type="RefSeq" id="NP_001323213.1">
    <property type="nucleotide sequence ID" value="NM_001333848.1"/>
</dbReference>
<dbReference type="RefSeq" id="NP_176153.1">
    <property type="nucleotide sequence ID" value="NM_104637.4"/>
</dbReference>
<dbReference type="RefSeq" id="NP_683447.2">
    <property type="nucleotide sequence ID" value="NM_148606.3"/>
</dbReference>
<dbReference type="SMR" id="P0DI17"/>
<dbReference type="STRING" id="3702.P0DI17"/>
<dbReference type="PaxDb" id="3702-AT1G58848.1"/>
<dbReference type="EnsemblPlants" id="AT1G58848.1">
    <property type="protein sequence ID" value="AT1G58848.1"/>
    <property type="gene ID" value="AT1G58848"/>
</dbReference>
<dbReference type="EnsemblPlants" id="AT1G58848.2">
    <property type="protein sequence ID" value="AT1G58848.2"/>
    <property type="gene ID" value="AT1G58848"/>
</dbReference>
<dbReference type="EnsemblPlants" id="AT1G59218.1">
    <property type="protein sequence ID" value="AT1G59218.1"/>
    <property type="gene ID" value="AT1G59218"/>
</dbReference>
<dbReference type="EnsemblPlants" id="AT1G59218.2">
    <property type="protein sequence ID" value="AT1G59218.2"/>
    <property type="gene ID" value="AT1G59218"/>
</dbReference>
<dbReference type="EnsemblPlants" id="AT1G59218.3">
    <property type="protein sequence ID" value="AT1G59218.3"/>
    <property type="gene ID" value="AT1G59218"/>
</dbReference>
<dbReference type="GeneID" id="842226"/>
<dbReference type="Gramene" id="AT1G58848.1">
    <property type="protein sequence ID" value="AT1G58848.1"/>
    <property type="gene ID" value="AT1G58848"/>
</dbReference>
<dbReference type="Gramene" id="AT1G58848.2">
    <property type="protein sequence ID" value="AT1G58848.2"/>
    <property type="gene ID" value="AT1G58848"/>
</dbReference>
<dbReference type="Gramene" id="AT1G59218.1">
    <property type="protein sequence ID" value="AT1G59218.1"/>
    <property type="gene ID" value="AT1G59218"/>
</dbReference>
<dbReference type="Gramene" id="AT1G59218.2">
    <property type="protein sequence ID" value="AT1G59218.2"/>
    <property type="gene ID" value="AT1G59218"/>
</dbReference>
<dbReference type="Gramene" id="AT1G59218.3">
    <property type="protein sequence ID" value="AT1G59218.3"/>
    <property type="gene ID" value="AT1G59218"/>
</dbReference>
<dbReference type="KEGG" id="ath:AT1G58848"/>
<dbReference type="KEGG" id="ath:AT1G59218"/>
<dbReference type="Araport" id="AT1G58848"/>
<dbReference type="TAIR" id="AT1G58848"/>
<dbReference type="eggNOG" id="KOG4658">
    <property type="taxonomic scope" value="Eukaryota"/>
</dbReference>
<dbReference type="HOGENOM" id="CLU_000837_35_5_1"/>
<dbReference type="InParanoid" id="P0DI17"/>
<dbReference type="OMA" id="FINCVGE"/>
<dbReference type="PhylomeDB" id="P0DI17"/>
<dbReference type="PRO" id="PR:P0DI17"/>
<dbReference type="Proteomes" id="UP000006548">
    <property type="component" value="Chromosome 1"/>
</dbReference>
<dbReference type="ExpressionAtlas" id="P0DI17">
    <property type="expression patterns" value="baseline and differential"/>
</dbReference>
<dbReference type="GO" id="GO:0043531">
    <property type="term" value="F:ADP binding"/>
    <property type="evidence" value="ECO:0007669"/>
    <property type="project" value="InterPro"/>
</dbReference>
<dbReference type="GO" id="GO:0005524">
    <property type="term" value="F:ATP binding"/>
    <property type="evidence" value="ECO:0007669"/>
    <property type="project" value="UniProtKB-KW"/>
</dbReference>
<dbReference type="GO" id="GO:0098542">
    <property type="term" value="P:defense response to other organism"/>
    <property type="evidence" value="ECO:0007669"/>
    <property type="project" value="UniProtKB-ARBA"/>
</dbReference>
<dbReference type="CDD" id="cd14798">
    <property type="entry name" value="RX-CC_like"/>
    <property type="match status" value="1"/>
</dbReference>
<dbReference type="FunFam" id="3.80.10.10:FF:000940">
    <property type="entry name" value="Disease resistance RPP8-like protein 3"/>
    <property type="match status" value="1"/>
</dbReference>
<dbReference type="FunFam" id="3.40.50.300:FF:001091">
    <property type="entry name" value="Probable disease resistance protein At1g61300"/>
    <property type="match status" value="1"/>
</dbReference>
<dbReference type="FunFam" id="1.10.10.10:FF:000322">
    <property type="entry name" value="Probable disease resistance protein At1g63360"/>
    <property type="match status" value="1"/>
</dbReference>
<dbReference type="FunFam" id="1.10.8.430:FF:000003">
    <property type="entry name" value="Probable disease resistance protein At5g66910"/>
    <property type="match status" value="1"/>
</dbReference>
<dbReference type="Gene3D" id="1.20.5.4130">
    <property type="match status" value="1"/>
</dbReference>
<dbReference type="Gene3D" id="1.10.8.430">
    <property type="entry name" value="Helical domain of apoptotic protease-activating factors"/>
    <property type="match status" value="1"/>
</dbReference>
<dbReference type="Gene3D" id="3.40.50.300">
    <property type="entry name" value="P-loop containing nucleotide triphosphate hydrolases"/>
    <property type="match status" value="1"/>
</dbReference>
<dbReference type="Gene3D" id="3.80.10.10">
    <property type="entry name" value="Ribonuclease Inhibitor"/>
    <property type="match status" value="3"/>
</dbReference>
<dbReference type="Gene3D" id="1.10.10.10">
    <property type="entry name" value="Winged helix-like DNA-binding domain superfamily/Winged helix DNA-binding domain"/>
    <property type="match status" value="1"/>
</dbReference>
<dbReference type="InterPro" id="IPR042197">
    <property type="entry name" value="Apaf_helical"/>
</dbReference>
<dbReference type="InterPro" id="IPR032675">
    <property type="entry name" value="LRR_dom_sf"/>
</dbReference>
<dbReference type="InterPro" id="IPR055414">
    <property type="entry name" value="LRR_R13L4/SHOC2-like"/>
</dbReference>
<dbReference type="InterPro" id="IPR002182">
    <property type="entry name" value="NB-ARC"/>
</dbReference>
<dbReference type="InterPro" id="IPR027417">
    <property type="entry name" value="P-loop_NTPase"/>
</dbReference>
<dbReference type="InterPro" id="IPR038005">
    <property type="entry name" value="RX-like_CC"/>
</dbReference>
<dbReference type="InterPro" id="IPR041118">
    <property type="entry name" value="Rx_N"/>
</dbReference>
<dbReference type="InterPro" id="IPR036388">
    <property type="entry name" value="WH-like_DNA-bd_sf"/>
</dbReference>
<dbReference type="PANTHER" id="PTHR36766">
    <property type="entry name" value="PLANT BROAD-SPECTRUM MILDEW RESISTANCE PROTEIN RPW8"/>
    <property type="match status" value="1"/>
</dbReference>
<dbReference type="PANTHER" id="PTHR36766:SF30">
    <property type="entry name" value="TIR-NBS TYPE DISEASE RESISTANCE PROTEIN-RELATED"/>
    <property type="match status" value="1"/>
</dbReference>
<dbReference type="Pfam" id="PF23598">
    <property type="entry name" value="LRR_14"/>
    <property type="match status" value="1"/>
</dbReference>
<dbReference type="Pfam" id="PF00931">
    <property type="entry name" value="NB-ARC"/>
    <property type="match status" value="1"/>
</dbReference>
<dbReference type="Pfam" id="PF18052">
    <property type="entry name" value="Rx_N"/>
    <property type="match status" value="1"/>
</dbReference>
<dbReference type="Pfam" id="PF23559">
    <property type="entry name" value="WH_DRP"/>
    <property type="match status" value="1"/>
</dbReference>
<dbReference type="PRINTS" id="PR00364">
    <property type="entry name" value="DISEASERSIST"/>
</dbReference>
<dbReference type="SUPFAM" id="SSF52058">
    <property type="entry name" value="L domain-like"/>
    <property type="match status" value="1"/>
</dbReference>
<dbReference type="SUPFAM" id="SSF52540">
    <property type="entry name" value="P-loop containing nucleoside triphosphate hydrolases"/>
    <property type="match status" value="1"/>
</dbReference>
<dbReference type="SUPFAM" id="SSF52047">
    <property type="entry name" value="RNI-like"/>
    <property type="match status" value="1"/>
</dbReference>
<organism>
    <name type="scientific">Arabidopsis thaliana</name>
    <name type="common">Mouse-ear cress</name>
    <dbReference type="NCBI Taxonomy" id="3702"/>
    <lineage>
        <taxon>Eukaryota</taxon>
        <taxon>Viridiplantae</taxon>
        <taxon>Streptophyta</taxon>
        <taxon>Embryophyta</taxon>
        <taxon>Tracheophyta</taxon>
        <taxon>Spermatophyta</taxon>
        <taxon>Magnoliopsida</taxon>
        <taxon>eudicotyledons</taxon>
        <taxon>Gunneridae</taxon>
        <taxon>Pentapetalae</taxon>
        <taxon>rosids</taxon>
        <taxon>malvids</taxon>
        <taxon>Brassicales</taxon>
        <taxon>Brassicaceae</taxon>
        <taxon>Camelineae</taxon>
        <taxon>Arabidopsis</taxon>
    </lineage>
</organism>
<protein>
    <recommendedName>
        <fullName>Probable disease resistance protein RF9</fullName>
    </recommendedName>
</protein>
<reference key="1">
    <citation type="journal article" date="1999" name="Gene">
        <title>Isolation and analysis of cDNA within a 300 kb Arabidopsis thaliana genomic region located around the 100 map unit of chromosome 1.</title>
        <authorList>
            <person name="Kato A."/>
            <person name="Suzuki M."/>
            <person name="Kuwahara A."/>
            <person name="Ooe H."/>
            <person name="Higano-Inaba K."/>
            <person name="Komeda Y."/>
        </authorList>
    </citation>
    <scope>NUCLEOTIDE SEQUENCE [GENOMIC DNA / MRNA]</scope>
    <source>
        <strain>cv. Columbia</strain>
    </source>
</reference>
<reference key="2">
    <citation type="journal article" date="2000" name="Nature">
        <title>Sequence and analysis of chromosome 1 of the plant Arabidopsis thaliana.</title>
        <authorList>
            <person name="Theologis A."/>
            <person name="Ecker J.R."/>
            <person name="Palm C.J."/>
            <person name="Federspiel N.A."/>
            <person name="Kaul S."/>
            <person name="White O."/>
            <person name="Alonso J."/>
            <person name="Altafi H."/>
            <person name="Araujo R."/>
            <person name="Bowman C.L."/>
            <person name="Brooks S.Y."/>
            <person name="Buehler E."/>
            <person name="Chan A."/>
            <person name="Chao Q."/>
            <person name="Chen H."/>
            <person name="Cheuk R.F."/>
            <person name="Chin C.W."/>
            <person name="Chung M.K."/>
            <person name="Conn L."/>
            <person name="Conway A.B."/>
            <person name="Conway A.R."/>
            <person name="Creasy T.H."/>
            <person name="Dewar K."/>
            <person name="Dunn P."/>
            <person name="Etgu P."/>
            <person name="Feldblyum T.V."/>
            <person name="Feng J.-D."/>
            <person name="Fong B."/>
            <person name="Fujii C.Y."/>
            <person name="Gill J.E."/>
            <person name="Goldsmith A.D."/>
            <person name="Haas B."/>
            <person name="Hansen N.F."/>
            <person name="Hughes B."/>
            <person name="Huizar L."/>
            <person name="Hunter J.L."/>
            <person name="Jenkins J."/>
            <person name="Johnson-Hopson C."/>
            <person name="Khan S."/>
            <person name="Khaykin E."/>
            <person name="Kim C.J."/>
            <person name="Koo H.L."/>
            <person name="Kremenetskaia I."/>
            <person name="Kurtz D.B."/>
            <person name="Kwan A."/>
            <person name="Lam B."/>
            <person name="Langin-Hooper S."/>
            <person name="Lee A."/>
            <person name="Lee J.M."/>
            <person name="Lenz C.A."/>
            <person name="Li J.H."/>
            <person name="Li Y.-P."/>
            <person name="Lin X."/>
            <person name="Liu S.X."/>
            <person name="Liu Z.A."/>
            <person name="Luros J.S."/>
            <person name="Maiti R."/>
            <person name="Marziali A."/>
            <person name="Militscher J."/>
            <person name="Miranda M."/>
            <person name="Nguyen M."/>
            <person name="Nierman W.C."/>
            <person name="Osborne B.I."/>
            <person name="Pai G."/>
            <person name="Peterson J."/>
            <person name="Pham P.K."/>
            <person name="Rizzo M."/>
            <person name="Rooney T."/>
            <person name="Rowley D."/>
            <person name="Sakano H."/>
            <person name="Salzberg S.L."/>
            <person name="Schwartz J.R."/>
            <person name="Shinn P."/>
            <person name="Southwick A.M."/>
            <person name="Sun H."/>
            <person name="Tallon L.J."/>
            <person name="Tambunga G."/>
            <person name="Toriumi M.J."/>
            <person name="Town C.D."/>
            <person name="Utterback T."/>
            <person name="Van Aken S."/>
            <person name="Vaysberg M."/>
            <person name="Vysotskaia V.S."/>
            <person name="Walker M."/>
            <person name="Wu D."/>
            <person name="Yu G."/>
            <person name="Fraser C.M."/>
            <person name="Venter J.C."/>
            <person name="Davis R.W."/>
        </authorList>
    </citation>
    <scope>NUCLEOTIDE SEQUENCE [LARGE SCALE GENOMIC DNA]</scope>
    <source>
        <strain>cv. Columbia</strain>
    </source>
</reference>
<reference key="3">
    <citation type="journal article" date="2017" name="Plant J.">
        <title>Araport11: a complete reannotation of the Arabidopsis thaliana reference genome.</title>
        <authorList>
            <person name="Cheng C.Y."/>
            <person name="Krishnakumar V."/>
            <person name="Chan A.P."/>
            <person name="Thibaud-Nissen F."/>
            <person name="Schobel S."/>
            <person name="Town C.D."/>
        </authorList>
    </citation>
    <scope>GENOME REANNOTATION</scope>
    <source>
        <strain>cv. Columbia</strain>
    </source>
</reference>
<gene>
    <name type="primary">RF9</name>
    <name type="synonym">RXW15</name>
    <name type="ordered locus">At1g58848</name>
    <name type="ORF">R18I.1</name>
    <name type="ORF">T4M14.3</name>
</gene>
<comment type="function">
    <text>Potential disease resistance protein.</text>
</comment>
<comment type="domain">
    <text evidence="1">The LRR repeats probably act as specificity determinant of pathogen recognition.</text>
</comment>
<comment type="similarity">
    <text evidence="4">Belongs to the disease resistance NB-LRR family.</text>
</comment>
<comment type="sequence caution" evidence="4">
    <conflict type="erroneous gene model prediction">
        <sequence resource="EMBL-CDS" id="AAK62794"/>
    </conflict>
</comment>
<comment type="sequence caution" evidence="4">
    <conflict type="erroneous initiation">
        <sequence resource="EMBL-CDS" id="BAA87941"/>
    </conflict>
    <text>Extended N-terminus.</text>
</comment>
<comment type="online information" name="NIB-LRRS">
    <link uri="http://niblrrs.ucdavis.edu"/>
    <text>Functional and comparative genomics of disease resistance gene homologs</text>
</comment>